<dbReference type="EC" id="1.1.1.267" evidence="1"/>
<dbReference type="EMBL" id="CP000901">
    <property type="protein sequence ID" value="ABX87055.1"/>
    <property type="molecule type" value="Genomic_DNA"/>
</dbReference>
<dbReference type="SMR" id="A9R392"/>
<dbReference type="KEGG" id="ypg:YpAngola_A3431"/>
<dbReference type="PATRIC" id="fig|349746.12.peg.126"/>
<dbReference type="UniPathway" id="UPA00056">
    <property type="reaction ID" value="UER00092"/>
</dbReference>
<dbReference type="GO" id="GO:0030604">
    <property type="term" value="F:1-deoxy-D-xylulose-5-phosphate reductoisomerase activity"/>
    <property type="evidence" value="ECO:0007669"/>
    <property type="project" value="UniProtKB-UniRule"/>
</dbReference>
<dbReference type="GO" id="GO:0030145">
    <property type="term" value="F:manganese ion binding"/>
    <property type="evidence" value="ECO:0007669"/>
    <property type="project" value="TreeGrafter"/>
</dbReference>
<dbReference type="GO" id="GO:0070402">
    <property type="term" value="F:NADPH binding"/>
    <property type="evidence" value="ECO:0007669"/>
    <property type="project" value="InterPro"/>
</dbReference>
<dbReference type="GO" id="GO:0051484">
    <property type="term" value="P:isopentenyl diphosphate biosynthetic process, methylerythritol 4-phosphate pathway involved in terpenoid biosynthetic process"/>
    <property type="evidence" value="ECO:0007669"/>
    <property type="project" value="TreeGrafter"/>
</dbReference>
<dbReference type="FunFam" id="1.10.1740.10:FF:000004">
    <property type="entry name" value="1-deoxy-D-xylulose 5-phosphate reductoisomerase"/>
    <property type="match status" value="1"/>
</dbReference>
<dbReference type="FunFam" id="3.40.50.720:FF:000045">
    <property type="entry name" value="1-deoxy-D-xylulose 5-phosphate reductoisomerase"/>
    <property type="match status" value="1"/>
</dbReference>
<dbReference type="Gene3D" id="1.10.1740.10">
    <property type="match status" value="1"/>
</dbReference>
<dbReference type="Gene3D" id="3.40.50.720">
    <property type="entry name" value="NAD(P)-binding Rossmann-like Domain"/>
    <property type="match status" value="1"/>
</dbReference>
<dbReference type="HAMAP" id="MF_00183">
    <property type="entry name" value="DXP_reductoisom"/>
    <property type="match status" value="1"/>
</dbReference>
<dbReference type="InterPro" id="IPR003821">
    <property type="entry name" value="DXP_reductoisomerase"/>
</dbReference>
<dbReference type="InterPro" id="IPR013644">
    <property type="entry name" value="DXP_reductoisomerase_C"/>
</dbReference>
<dbReference type="InterPro" id="IPR013512">
    <property type="entry name" value="DXP_reductoisomerase_N"/>
</dbReference>
<dbReference type="InterPro" id="IPR026877">
    <property type="entry name" value="DXPR_C"/>
</dbReference>
<dbReference type="InterPro" id="IPR036169">
    <property type="entry name" value="DXPR_C_sf"/>
</dbReference>
<dbReference type="InterPro" id="IPR036291">
    <property type="entry name" value="NAD(P)-bd_dom_sf"/>
</dbReference>
<dbReference type="NCBIfam" id="TIGR00243">
    <property type="entry name" value="Dxr"/>
    <property type="match status" value="1"/>
</dbReference>
<dbReference type="NCBIfam" id="NF003938">
    <property type="entry name" value="PRK05447.1-1"/>
    <property type="match status" value="1"/>
</dbReference>
<dbReference type="NCBIfam" id="NF009114">
    <property type="entry name" value="PRK12464.1"/>
    <property type="match status" value="1"/>
</dbReference>
<dbReference type="PANTHER" id="PTHR30525">
    <property type="entry name" value="1-DEOXY-D-XYLULOSE 5-PHOSPHATE REDUCTOISOMERASE"/>
    <property type="match status" value="1"/>
</dbReference>
<dbReference type="PANTHER" id="PTHR30525:SF0">
    <property type="entry name" value="1-DEOXY-D-XYLULOSE 5-PHOSPHATE REDUCTOISOMERASE, CHLOROPLASTIC"/>
    <property type="match status" value="1"/>
</dbReference>
<dbReference type="Pfam" id="PF08436">
    <property type="entry name" value="DXP_redisom_C"/>
    <property type="match status" value="1"/>
</dbReference>
<dbReference type="Pfam" id="PF02670">
    <property type="entry name" value="DXP_reductoisom"/>
    <property type="match status" value="1"/>
</dbReference>
<dbReference type="Pfam" id="PF13288">
    <property type="entry name" value="DXPR_C"/>
    <property type="match status" value="1"/>
</dbReference>
<dbReference type="PIRSF" id="PIRSF006205">
    <property type="entry name" value="Dxp_reductismrs"/>
    <property type="match status" value="1"/>
</dbReference>
<dbReference type="SUPFAM" id="SSF69055">
    <property type="entry name" value="1-deoxy-D-xylulose-5-phosphate reductoisomerase, C-terminal domain"/>
    <property type="match status" value="1"/>
</dbReference>
<dbReference type="SUPFAM" id="SSF55347">
    <property type="entry name" value="Glyceraldehyde-3-phosphate dehydrogenase-like, C-terminal domain"/>
    <property type="match status" value="1"/>
</dbReference>
<dbReference type="SUPFAM" id="SSF51735">
    <property type="entry name" value="NAD(P)-binding Rossmann-fold domains"/>
    <property type="match status" value="1"/>
</dbReference>
<feature type="chain" id="PRO_1000098531" description="1-deoxy-D-xylulose 5-phosphate reductoisomerase">
    <location>
        <begin position="1"/>
        <end position="398"/>
    </location>
</feature>
<feature type="binding site" evidence="1">
    <location>
        <position position="10"/>
    </location>
    <ligand>
        <name>NADPH</name>
        <dbReference type="ChEBI" id="CHEBI:57783"/>
    </ligand>
</feature>
<feature type="binding site" evidence="1">
    <location>
        <position position="11"/>
    </location>
    <ligand>
        <name>NADPH</name>
        <dbReference type="ChEBI" id="CHEBI:57783"/>
    </ligand>
</feature>
<feature type="binding site" evidence="1">
    <location>
        <position position="12"/>
    </location>
    <ligand>
        <name>NADPH</name>
        <dbReference type="ChEBI" id="CHEBI:57783"/>
    </ligand>
</feature>
<feature type="binding site" evidence="1">
    <location>
        <position position="13"/>
    </location>
    <ligand>
        <name>NADPH</name>
        <dbReference type="ChEBI" id="CHEBI:57783"/>
    </ligand>
</feature>
<feature type="binding site" evidence="1">
    <location>
        <position position="36"/>
    </location>
    <ligand>
        <name>NADPH</name>
        <dbReference type="ChEBI" id="CHEBI:57783"/>
    </ligand>
</feature>
<feature type="binding site" evidence="1">
    <location>
        <position position="37"/>
    </location>
    <ligand>
        <name>NADPH</name>
        <dbReference type="ChEBI" id="CHEBI:57783"/>
    </ligand>
</feature>
<feature type="binding site" evidence="1">
    <location>
        <position position="38"/>
    </location>
    <ligand>
        <name>NADPH</name>
        <dbReference type="ChEBI" id="CHEBI:57783"/>
    </ligand>
</feature>
<feature type="binding site" evidence="1">
    <location>
        <position position="124"/>
    </location>
    <ligand>
        <name>NADPH</name>
        <dbReference type="ChEBI" id="CHEBI:57783"/>
    </ligand>
</feature>
<feature type="binding site" evidence="1">
    <location>
        <position position="125"/>
    </location>
    <ligand>
        <name>1-deoxy-D-xylulose 5-phosphate</name>
        <dbReference type="ChEBI" id="CHEBI:57792"/>
    </ligand>
</feature>
<feature type="binding site" evidence="1">
    <location>
        <position position="126"/>
    </location>
    <ligand>
        <name>NADPH</name>
        <dbReference type="ChEBI" id="CHEBI:57783"/>
    </ligand>
</feature>
<feature type="binding site" evidence="1">
    <location>
        <position position="150"/>
    </location>
    <ligand>
        <name>Mn(2+)</name>
        <dbReference type="ChEBI" id="CHEBI:29035"/>
    </ligand>
</feature>
<feature type="binding site" evidence="1">
    <location>
        <position position="151"/>
    </location>
    <ligand>
        <name>1-deoxy-D-xylulose 5-phosphate</name>
        <dbReference type="ChEBI" id="CHEBI:57792"/>
    </ligand>
</feature>
<feature type="binding site" evidence="1">
    <location>
        <position position="152"/>
    </location>
    <ligand>
        <name>1-deoxy-D-xylulose 5-phosphate</name>
        <dbReference type="ChEBI" id="CHEBI:57792"/>
    </ligand>
</feature>
<feature type="binding site" evidence="1">
    <location>
        <position position="152"/>
    </location>
    <ligand>
        <name>Mn(2+)</name>
        <dbReference type="ChEBI" id="CHEBI:29035"/>
    </ligand>
</feature>
<feature type="binding site" evidence="1">
    <location>
        <position position="186"/>
    </location>
    <ligand>
        <name>1-deoxy-D-xylulose 5-phosphate</name>
        <dbReference type="ChEBI" id="CHEBI:57792"/>
    </ligand>
</feature>
<feature type="binding site" evidence="1">
    <location>
        <position position="209"/>
    </location>
    <ligand>
        <name>1-deoxy-D-xylulose 5-phosphate</name>
        <dbReference type="ChEBI" id="CHEBI:57792"/>
    </ligand>
</feature>
<feature type="binding site" evidence="1">
    <location>
        <position position="215"/>
    </location>
    <ligand>
        <name>NADPH</name>
        <dbReference type="ChEBI" id="CHEBI:57783"/>
    </ligand>
</feature>
<feature type="binding site" evidence="1">
    <location>
        <position position="222"/>
    </location>
    <ligand>
        <name>1-deoxy-D-xylulose 5-phosphate</name>
        <dbReference type="ChEBI" id="CHEBI:57792"/>
    </ligand>
</feature>
<feature type="binding site" evidence="1">
    <location>
        <position position="227"/>
    </location>
    <ligand>
        <name>1-deoxy-D-xylulose 5-phosphate</name>
        <dbReference type="ChEBI" id="CHEBI:57792"/>
    </ligand>
</feature>
<feature type="binding site" evidence="1">
    <location>
        <position position="228"/>
    </location>
    <ligand>
        <name>1-deoxy-D-xylulose 5-phosphate</name>
        <dbReference type="ChEBI" id="CHEBI:57792"/>
    </ligand>
</feature>
<feature type="binding site" evidence="1">
    <location>
        <position position="231"/>
    </location>
    <ligand>
        <name>1-deoxy-D-xylulose 5-phosphate</name>
        <dbReference type="ChEBI" id="CHEBI:57792"/>
    </ligand>
</feature>
<feature type="binding site" evidence="1">
    <location>
        <position position="231"/>
    </location>
    <ligand>
        <name>Mn(2+)</name>
        <dbReference type="ChEBI" id="CHEBI:29035"/>
    </ligand>
</feature>
<reference key="1">
    <citation type="journal article" date="2010" name="J. Bacteriol.">
        <title>Genome sequence of the deep-rooted Yersinia pestis strain Angola reveals new insights into the evolution and pangenome of the plague bacterium.</title>
        <authorList>
            <person name="Eppinger M."/>
            <person name="Worsham P.L."/>
            <person name="Nikolich M.P."/>
            <person name="Riley D.R."/>
            <person name="Sebastian Y."/>
            <person name="Mou S."/>
            <person name="Achtman M."/>
            <person name="Lindler L.E."/>
            <person name="Ravel J."/>
        </authorList>
    </citation>
    <scope>NUCLEOTIDE SEQUENCE [LARGE SCALE GENOMIC DNA]</scope>
    <source>
        <strain>Angola</strain>
    </source>
</reference>
<protein>
    <recommendedName>
        <fullName evidence="1">1-deoxy-D-xylulose 5-phosphate reductoisomerase</fullName>
        <shortName evidence="1">DXP reductoisomerase</shortName>
        <ecNumber evidence="1">1.1.1.267</ecNumber>
    </recommendedName>
    <alternativeName>
        <fullName evidence="1">1-deoxyxylulose-5-phosphate reductoisomerase</fullName>
    </alternativeName>
    <alternativeName>
        <fullName evidence="1">2-C-methyl-D-erythritol 4-phosphate synthase</fullName>
    </alternativeName>
</protein>
<gene>
    <name evidence="1" type="primary">dxr</name>
    <name type="ordered locus">YpAngola_A3431</name>
</gene>
<proteinExistence type="inferred from homology"/>
<name>DXR_YERPG</name>
<accession>A9R392</accession>
<evidence type="ECO:0000255" key="1">
    <source>
        <dbReference type="HAMAP-Rule" id="MF_00183"/>
    </source>
</evidence>
<sequence>MKQLTILGSTGSIGNSTLSVVRANPELFKVTALVAGRNVREMAQQCLEFSPRYAAMSDEHSAKSLRLLLAEQGSDTEVYSGETAACELAALDDVDQVMAAIVGIAGLPSTLAAIRAGKQVLLANKESLITCGKLFMDEVKRSRAQLLPIDSEHNAIFQSLPERIQRQLGYSSLNENGVSRIILTGSGGPFRETPLSQFSDVTPDQACAHPNWSMGRKISVDSATMMNKGLEYIEARWLFNASAEQIEVVLHPQSVIHSMVRYHDGSILAQMGTPDMRTPIAHAMAYPMRVSSGVAPLDFCKVGALTFTTPDYQRYPCLKLAIDACNAGQAATTALNAANEISVMAFLDSKIRFTDIEVINRTVVEGLLLSEPTSVEEVLVIDRKARDVAAQVIAKLNN</sequence>
<keyword id="KW-0414">Isoprene biosynthesis</keyword>
<keyword id="KW-0464">Manganese</keyword>
<keyword id="KW-0479">Metal-binding</keyword>
<keyword id="KW-0521">NADP</keyword>
<keyword id="KW-0560">Oxidoreductase</keyword>
<organism>
    <name type="scientific">Yersinia pestis bv. Antiqua (strain Angola)</name>
    <dbReference type="NCBI Taxonomy" id="349746"/>
    <lineage>
        <taxon>Bacteria</taxon>
        <taxon>Pseudomonadati</taxon>
        <taxon>Pseudomonadota</taxon>
        <taxon>Gammaproteobacteria</taxon>
        <taxon>Enterobacterales</taxon>
        <taxon>Yersiniaceae</taxon>
        <taxon>Yersinia</taxon>
    </lineage>
</organism>
<comment type="function">
    <text evidence="1">Catalyzes the NADPH-dependent rearrangement and reduction of 1-deoxy-D-xylulose-5-phosphate (DXP) to 2-C-methyl-D-erythritol 4-phosphate (MEP).</text>
</comment>
<comment type="catalytic activity">
    <reaction evidence="1">
        <text>2-C-methyl-D-erythritol 4-phosphate + NADP(+) = 1-deoxy-D-xylulose 5-phosphate + NADPH + H(+)</text>
        <dbReference type="Rhea" id="RHEA:13717"/>
        <dbReference type="ChEBI" id="CHEBI:15378"/>
        <dbReference type="ChEBI" id="CHEBI:57783"/>
        <dbReference type="ChEBI" id="CHEBI:57792"/>
        <dbReference type="ChEBI" id="CHEBI:58262"/>
        <dbReference type="ChEBI" id="CHEBI:58349"/>
        <dbReference type="EC" id="1.1.1.267"/>
    </reaction>
    <physiologicalReaction direction="right-to-left" evidence="1">
        <dbReference type="Rhea" id="RHEA:13719"/>
    </physiologicalReaction>
</comment>
<comment type="cofactor">
    <cofactor evidence="1">
        <name>Mg(2+)</name>
        <dbReference type="ChEBI" id="CHEBI:18420"/>
    </cofactor>
    <cofactor evidence="1">
        <name>Mn(2+)</name>
        <dbReference type="ChEBI" id="CHEBI:29035"/>
    </cofactor>
</comment>
<comment type="pathway">
    <text evidence="1">Isoprenoid biosynthesis; isopentenyl diphosphate biosynthesis via DXP pathway; isopentenyl diphosphate from 1-deoxy-D-xylulose 5-phosphate: step 1/6.</text>
</comment>
<comment type="subunit">
    <text evidence="1">Homodimer.</text>
</comment>
<comment type="similarity">
    <text evidence="1">Belongs to the DXR family.</text>
</comment>